<proteinExistence type="inferred from homology"/>
<feature type="chain" id="PRO_1000084119" description="1-(5-phosphoribosyl)-5-[(5-phosphoribosylamino)methylideneamino] imidazole-4-carboxamide isomerase">
    <location>
        <begin position="1"/>
        <end position="234"/>
    </location>
</feature>
<feature type="active site" description="Proton acceptor" evidence="1">
    <location>
        <position position="9"/>
    </location>
</feature>
<feature type="active site" description="Proton donor" evidence="1">
    <location>
        <position position="131"/>
    </location>
</feature>
<accession>A8Z5H4</accession>
<reference key="1">
    <citation type="journal article" date="2007" name="BMC Microbiol.">
        <title>Subtle genetic changes enhance virulence of methicillin resistant and sensitive Staphylococcus aureus.</title>
        <authorList>
            <person name="Highlander S.K."/>
            <person name="Hulten K.G."/>
            <person name="Qin X."/>
            <person name="Jiang H."/>
            <person name="Yerrapragada S."/>
            <person name="Mason E.O. Jr."/>
            <person name="Shang Y."/>
            <person name="Williams T.M."/>
            <person name="Fortunov R.M."/>
            <person name="Liu Y."/>
            <person name="Igboeli O."/>
            <person name="Petrosino J."/>
            <person name="Tirumalai M."/>
            <person name="Uzman A."/>
            <person name="Fox G.E."/>
            <person name="Cardenas A.M."/>
            <person name="Muzny D.M."/>
            <person name="Hemphill L."/>
            <person name="Ding Y."/>
            <person name="Dugan S."/>
            <person name="Blyth P.R."/>
            <person name="Buhay C.J."/>
            <person name="Dinh H.H."/>
            <person name="Hawes A.C."/>
            <person name="Holder M."/>
            <person name="Kovar C.L."/>
            <person name="Lee S.L."/>
            <person name="Liu W."/>
            <person name="Nazareth L.V."/>
            <person name="Wang Q."/>
            <person name="Zhou J."/>
            <person name="Kaplan S.L."/>
            <person name="Weinstock G.M."/>
        </authorList>
    </citation>
    <scope>NUCLEOTIDE SEQUENCE [LARGE SCALE GENOMIC DNA]</scope>
    <source>
        <strain>USA300 / TCH1516</strain>
    </source>
</reference>
<keyword id="KW-0028">Amino-acid biosynthesis</keyword>
<keyword id="KW-0963">Cytoplasm</keyword>
<keyword id="KW-0368">Histidine biosynthesis</keyword>
<keyword id="KW-0413">Isomerase</keyword>
<dbReference type="EC" id="5.3.1.16" evidence="1"/>
<dbReference type="EMBL" id="CP000730">
    <property type="protein sequence ID" value="ABX30661.1"/>
    <property type="molecule type" value="Genomic_DNA"/>
</dbReference>
<dbReference type="RefSeq" id="WP_000571736.1">
    <property type="nucleotide sequence ID" value="NC_010079.1"/>
</dbReference>
<dbReference type="SMR" id="A8Z5H4"/>
<dbReference type="KEGG" id="sax:USA300HOU_2675"/>
<dbReference type="HOGENOM" id="CLU_048577_1_2_9"/>
<dbReference type="UniPathway" id="UPA00031">
    <property type="reaction ID" value="UER00009"/>
</dbReference>
<dbReference type="GO" id="GO:0005737">
    <property type="term" value="C:cytoplasm"/>
    <property type="evidence" value="ECO:0007669"/>
    <property type="project" value="UniProtKB-SubCell"/>
</dbReference>
<dbReference type="GO" id="GO:0003949">
    <property type="term" value="F:1-(5-phosphoribosyl)-5-[(5-phosphoribosylamino)methylideneamino]imidazole-4-carboxamide isomerase activity"/>
    <property type="evidence" value="ECO:0007669"/>
    <property type="project" value="UniProtKB-UniRule"/>
</dbReference>
<dbReference type="GO" id="GO:0000105">
    <property type="term" value="P:L-histidine biosynthetic process"/>
    <property type="evidence" value="ECO:0007669"/>
    <property type="project" value="UniProtKB-UniRule"/>
</dbReference>
<dbReference type="GO" id="GO:0000162">
    <property type="term" value="P:L-tryptophan biosynthetic process"/>
    <property type="evidence" value="ECO:0007669"/>
    <property type="project" value="TreeGrafter"/>
</dbReference>
<dbReference type="CDD" id="cd04732">
    <property type="entry name" value="HisA"/>
    <property type="match status" value="1"/>
</dbReference>
<dbReference type="FunFam" id="3.20.20.70:FF:000213">
    <property type="entry name" value="1-(5-phosphoribosyl)-5-[(5-phosphoribosylamino)methylideneamino] imidazole-4-carboxamide isomerase"/>
    <property type="match status" value="1"/>
</dbReference>
<dbReference type="Gene3D" id="3.20.20.70">
    <property type="entry name" value="Aldolase class I"/>
    <property type="match status" value="1"/>
</dbReference>
<dbReference type="HAMAP" id="MF_01014">
    <property type="entry name" value="HisA"/>
    <property type="match status" value="1"/>
</dbReference>
<dbReference type="InterPro" id="IPR013785">
    <property type="entry name" value="Aldolase_TIM"/>
</dbReference>
<dbReference type="InterPro" id="IPR006062">
    <property type="entry name" value="His_biosynth"/>
</dbReference>
<dbReference type="InterPro" id="IPR006063">
    <property type="entry name" value="HisA_bact_arch"/>
</dbReference>
<dbReference type="InterPro" id="IPR044524">
    <property type="entry name" value="Isoase_HisA-like"/>
</dbReference>
<dbReference type="InterPro" id="IPR023016">
    <property type="entry name" value="Isoase_HisA-like_bact"/>
</dbReference>
<dbReference type="InterPro" id="IPR011060">
    <property type="entry name" value="RibuloseP-bd_barrel"/>
</dbReference>
<dbReference type="NCBIfam" id="TIGR00007">
    <property type="entry name" value="1-(5-phosphoribosyl)-5-[(5-phosphoribosylamino)methylideneamino]imidazole-4-carboxamide isomerase"/>
    <property type="match status" value="1"/>
</dbReference>
<dbReference type="NCBIfam" id="NF010114">
    <property type="entry name" value="PRK13587.1"/>
    <property type="match status" value="1"/>
</dbReference>
<dbReference type="PANTHER" id="PTHR43090">
    <property type="entry name" value="1-(5-PHOSPHORIBOSYL)-5-[(5-PHOSPHORIBOSYLAMINO)METHYLIDENEAMINO] IMIDAZOLE-4-CARBOXAMIDE ISOMERASE"/>
    <property type="match status" value="1"/>
</dbReference>
<dbReference type="PANTHER" id="PTHR43090:SF2">
    <property type="entry name" value="1-(5-PHOSPHORIBOSYL)-5-[(5-PHOSPHORIBOSYLAMINO)METHYLIDENEAMINO] IMIDAZOLE-4-CARBOXAMIDE ISOMERASE"/>
    <property type="match status" value="1"/>
</dbReference>
<dbReference type="Pfam" id="PF00977">
    <property type="entry name" value="His_biosynth"/>
    <property type="match status" value="1"/>
</dbReference>
<dbReference type="SUPFAM" id="SSF51366">
    <property type="entry name" value="Ribulose-phoshate binding barrel"/>
    <property type="match status" value="1"/>
</dbReference>
<evidence type="ECO:0000255" key="1">
    <source>
        <dbReference type="HAMAP-Rule" id="MF_01014"/>
    </source>
</evidence>
<organism>
    <name type="scientific">Staphylococcus aureus (strain USA300 / TCH1516)</name>
    <dbReference type="NCBI Taxonomy" id="451516"/>
    <lineage>
        <taxon>Bacteria</taxon>
        <taxon>Bacillati</taxon>
        <taxon>Bacillota</taxon>
        <taxon>Bacilli</taxon>
        <taxon>Bacillales</taxon>
        <taxon>Staphylococcaceae</taxon>
        <taxon>Staphylococcus</taxon>
    </lineage>
</organism>
<comment type="catalytic activity">
    <reaction evidence="1">
        <text>1-(5-phospho-beta-D-ribosyl)-5-[(5-phospho-beta-D-ribosylamino)methylideneamino]imidazole-4-carboxamide = 5-[(5-phospho-1-deoxy-D-ribulos-1-ylimino)methylamino]-1-(5-phospho-beta-D-ribosyl)imidazole-4-carboxamide</text>
        <dbReference type="Rhea" id="RHEA:15469"/>
        <dbReference type="ChEBI" id="CHEBI:58435"/>
        <dbReference type="ChEBI" id="CHEBI:58525"/>
        <dbReference type="EC" id="5.3.1.16"/>
    </reaction>
</comment>
<comment type="pathway">
    <text evidence="1">Amino-acid biosynthesis; L-histidine biosynthesis; L-histidine from 5-phospho-alpha-D-ribose 1-diphosphate: step 4/9.</text>
</comment>
<comment type="subcellular location">
    <subcellularLocation>
        <location evidence="1">Cytoplasm</location>
    </subcellularLocation>
</comment>
<comment type="similarity">
    <text evidence="1">Belongs to the HisA/HisF family.</text>
</comment>
<name>HIS4_STAAT</name>
<sequence length="234" mass="26091">MIELWPAIDLIGSTSVRLTEGKYDSEEKMSRSAEESIAYYSQFECVNRIHIVDLIGAKAQHAREFDYIKSLRRLTTKDIEVGGGIRTKSQIMDYFAAGINYCIVGTKGIQDTDWLKEMAHTFPGRIYLSVDAYGEDIKVNGWEEDTELNLFSFVRRLSDIPLGGIIYTDIAKDGKMSGPNFELTGQLVKATTIPVIASGGIRHQQDIQRLASLNVHAAIIGKAAHQASFWEGLK</sequence>
<gene>
    <name evidence="1" type="primary">hisA</name>
    <name type="ordered locus">USA300HOU_2675</name>
</gene>
<protein>
    <recommendedName>
        <fullName evidence="1">1-(5-phosphoribosyl)-5-[(5-phosphoribosylamino)methylideneamino] imidazole-4-carboxamide isomerase</fullName>
        <ecNumber evidence="1">5.3.1.16</ecNumber>
    </recommendedName>
    <alternativeName>
        <fullName evidence="1">Phosphoribosylformimino-5-aminoimidazole carboxamide ribotide isomerase</fullName>
    </alternativeName>
</protein>